<gene>
    <name evidence="1" type="primary">coaD</name>
    <name type="ordered locus">LCK_00491</name>
</gene>
<dbReference type="EC" id="2.7.7.3" evidence="1"/>
<dbReference type="EMBL" id="DQ489736">
    <property type="protein sequence ID" value="ACA82324.1"/>
    <property type="molecule type" value="Genomic_DNA"/>
</dbReference>
<dbReference type="RefSeq" id="WP_004903085.1">
    <property type="nucleotide sequence ID" value="NC_010471.1"/>
</dbReference>
<dbReference type="SMR" id="B1MXS2"/>
<dbReference type="STRING" id="349519.LCK_00491"/>
<dbReference type="GeneID" id="61102577"/>
<dbReference type="KEGG" id="lci:LCK_00491"/>
<dbReference type="eggNOG" id="COG0669">
    <property type="taxonomic scope" value="Bacteria"/>
</dbReference>
<dbReference type="HOGENOM" id="CLU_100149_1_1_9"/>
<dbReference type="OrthoDB" id="9806661at2"/>
<dbReference type="UniPathway" id="UPA00241">
    <property type="reaction ID" value="UER00355"/>
</dbReference>
<dbReference type="Proteomes" id="UP000002166">
    <property type="component" value="Chromosome"/>
</dbReference>
<dbReference type="GO" id="GO:0005737">
    <property type="term" value="C:cytoplasm"/>
    <property type="evidence" value="ECO:0007669"/>
    <property type="project" value="UniProtKB-SubCell"/>
</dbReference>
<dbReference type="GO" id="GO:0005524">
    <property type="term" value="F:ATP binding"/>
    <property type="evidence" value="ECO:0007669"/>
    <property type="project" value="UniProtKB-KW"/>
</dbReference>
<dbReference type="GO" id="GO:0004595">
    <property type="term" value="F:pantetheine-phosphate adenylyltransferase activity"/>
    <property type="evidence" value="ECO:0007669"/>
    <property type="project" value="UniProtKB-UniRule"/>
</dbReference>
<dbReference type="GO" id="GO:0015937">
    <property type="term" value="P:coenzyme A biosynthetic process"/>
    <property type="evidence" value="ECO:0007669"/>
    <property type="project" value="UniProtKB-UniRule"/>
</dbReference>
<dbReference type="CDD" id="cd02163">
    <property type="entry name" value="PPAT"/>
    <property type="match status" value="1"/>
</dbReference>
<dbReference type="Gene3D" id="3.40.50.620">
    <property type="entry name" value="HUPs"/>
    <property type="match status" value="1"/>
</dbReference>
<dbReference type="HAMAP" id="MF_00151">
    <property type="entry name" value="PPAT_bact"/>
    <property type="match status" value="1"/>
</dbReference>
<dbReference type="InterPro" id="IPR004821">
    <property type="entry name" value="Cyt_trans-like"/>
</dbReference>
<dbReference type="InterPro" id="IPR001980">
    <property type="entry name" value="PPAT"/>
</dbReference>
<dbReference type="InterPro" id="IPR014729">
    <property type="entry name" value="Rossmann-like_a/b/a_fold"/>
</dbReference>
<dbReference type="NCBIfam" id="TIGR01510">
    <property type="entry name" value="coaD_prev_kdtB"/>
    <property type="match status" value="1"/>
</dbReference>
<dbReference type="NCBIfam" id="TIGR00125">
    <property type="entry name" value="cyt_tran_rel"/>
    <property type="match status" value="1"/>
</dbReference>
<dbReference type="PANTHER" id="PTHR21342">
    <property type="entry name" value="PHOSPHOPANTETHEINE ADENYLYLTRANSFERASE"/>
    <property type="match status" value="1"/>
</dbReference>
<dbReference type="PANTHER" id="PTHR21342:SF1">
    <property type="entry name" value="PHOSPHOPANTETHEINE ADENYLYLTRANSFERASE"/>
    <property type="match status" value="1"/>
</dbReference>
<dbReference type="Pfam" id="PF01467">
    <property type="entry name" value="CTP_transf_like"/>
    <property type="match status" value="1"/>
</dbReference>
<dbReference type="PRINTS" id="PR01020">
    <property type="entry name" value="LPSBIOSNTHSS"/>
</dbReference>
<dbReference type="SUPFAM" id="SSF52374">
    <property type="entry name" value="Nucleotidylyl transferase"/>
    <property type="match status" value="1"/>
</dbReference>
<organism>
    <name type="scientific">Leuconostoc citreum (strain KM20)</name>
    <dbReference type="NCBI Taxonomy" id="349519"/>
    <lineage>
        <taxon>Bacteria</taxon>
        <taxon>Bacillati</taxon>
        <taxon>Bacillota</taxon>
        <taxon>Bacilli</taxon>
        <taxon>Lactobacillales</taxon>
        <taxon>Lactobacillaceae</taxon>
        <taxon>Leuconostoc</taxon>
    </lineage>
</organism>
<comment type="function">
    <text evidence="1">Reversibly transfers an adenylyl group from ATP to 4'-phosphopantetheine, yielding dephospho-CoA (dPCoA) and pyrophosphate.</text>
</comment>
<comment type="catalytic activity">
    <reaction evidence="1">
        <text>(R)-4'-phosphopantetheine + ATP + H(+) = 3'-dephospho-CoA + diphosphate</text>
        <dbReference type="Rhea" id="RHEA:19801"/>
        <dbReference type="ChEBI" id="CHEBI:15378"/>
        <dbReference type="ChEBI" id="CHEBI:30616"/>
        <dbReference type="ChEBI" id="CHEBI:33019"/>
        <dbReference type="ChEBI" id="CHEBI:57328"/>
        <dbReference type="ChEBI" id="CHEBI:61723"/>
        <dbReference type="EC" id="2.7.7.3"/>
    </reaction>
</comment>
<comment type="cofactor">
    <cofactor evidence="1">
        <name>Mg(2+)</name>
        <dbReference type="ChEBI" id="CHEBI:18420"/>
    </cofactor>
</comment>
<comment type="pathway">
    <text evidence="1">Cofactor biosynthesis; coenzyme A biosynthesis; CoA from (R)-pantothenate: step 4/5.</text>
</comment>
<comment type="subunit">
    <text evidence="1">Homohexamer.</text>
</comment>
<comment type="subcellular location">
    <subcellularLocation>
        <location evidence="1">Cytoplasm</location>
    </subcellularLocation>
</comment>
<comment type="similarity">
    <text evidence="1">Belongs to the bacterial CoaD family.</text>
</comment>
<keyword id="KW-0067">ATP-binding</keyword>
<keyword id="KW-0173">Coenzyme A biosynthesis</keyword>
<keyword id="KW-0963">Cytoplasm</keyword>
<keyword id="KW-0460">Magnesium</keyword>
<keyword id="KW-0547">Nucleotide-binding</keyword>
<keyword id="KW-0548">Nucleotidyltransferase</keyword>
<keyword id="KW-1185">Reference proteome</keyword>
<keyword id="KW-0808">Transferase</keyword>
<proteinExistence type="inferred from homology"/>
<accession>B1MXS2</accession>
<name>COAD_LEUCK</name>
<evidence type="ECO:0000255" key="1">
    <source>
        <dbReference type="HAMAP-Rule" id="MF_00151"/>
    </source>
</evidence>
<sequence>MSIALFPGSFDPLTNGHLDIIERASLMFDKVVVGVGYNTGKKALFTPEEKLALISEVVSDLPNVEVAIMHGLTVQFMAEIGARFIVRGLRNSKDFEYERDIAGVNSALADVETILLLAKPENQNISSSMVKEIGSMGADNMAKFVPKVVVDALKERLN</sequence>
<feature type="chain" id="PRO_1000096811" description="Phosphopantetheine adenylyltransferase">
    <location>
        <begin position="1"/>
        <end position="158"/>
    </location>
</feature>
<feature type="binding site" evidence="1">
    <location>
        <begin position="9"/>
        <end position="10"/>
    </location>
    <ligand>
        <name>ATP</name>
        <dbReference type="ChEBI" id="CHEBI:30616"/>
    </ligand>
</feature>
<feature type="binding site" evidence="1">
    <location>
        <position position="9"/>
    </location>
    <ligand>
        <name>substrate</name>
    </ligand>
</feature>
<feature type="binding site" evidence="1">
    <location>
        <position position="17"/>
    </location>
    <ligand>
        <name>ATP</name>
        <dbReference type="ChEBI" id="CHEBI:30616"/>
    </ligand>
</feature>
<feature type="binding site" evidence="1">
    <location>
        <position position="41"/>
    </location>
    <ligand>
        <name>substrate</name>
    </ligand>
</feature>
<feature type="binding site" evidence="1">
    <location>
        <position position="73"/>
    </location>
    <ligand>
        <name>substrate</name>
    </ligand>
</feature>
<feature type="binding site" evidence="1">
    <location>
        <position position="87"/>
    </location>
    <ligand>
        <name>substrate</name>
    </ligand>
</feature>
<feature type="binding site" evidence="1">
    <location>
        <begin position="88"/>
        <end position="90"/>
    </location>
    <ligand>
        <name>ATP</name>
        <dbReference type="ChEBI" id="CHEBI:30616"/>
    </ligand>
</feature>
<feature type="binding site" evidence="1">
    <location>
        <position position="98"/>
    </location>
    <ligand>
        <name>ATP</name>
        <dbReference type="ChEBI" id="CHEBI:30616"/>
    </ligand>
</feature>
<feature type="binding site" evidence="1">
    <location>
        <begin position="122"/>
        <end position="128"/>
    </location>
    <ligand>
        <name>ATP</name>
        <dbReference type="ChEBI" id="CHEBI:30616"/>
    </ligand>
</feature>
<feature type="site" description="Transition state stabilizer" evidence="1">
    <location>
        <position position="17"/>
    </location>
</feature>
<protein>
    <recommendedName>
        <fullName evidence="1">Phosphopantetheine adenylyltransferase</fullName>
        <ecNumber evidence="1">2.7.7.3</ecNumber>
    </recommendedName>
    <alternativeName>
        <fullName evidence="1">Dephospho-CoA pyrophosphorylase</fullName>
    </alternativeName>
    <alternativeName>
        <fullName evidence="1">Pantetheine-phosphate adenylyltransferase</fullName>
        <shortName evidence="1">PPAT</shortName>
    </alternativeName>
</protein>
<reference key="1">
    <citation type="journal article" date="2008" name="J. Bacteriol.">
        <title>Complete genome sequence of Leuconostoc citreum KM20.</title>
        <authorList>
            <person name="Kim J.F."/>
            <person name="Jeong H."/>
            <person name="Lee J.-S."/>
            <person name="Choi S.-H."/>
            <person name="Ha M."/>
            <person name="Hur C.-G."/>
            <person name="Kim J.-S."/>
            <person name="Lee S."/>
            <person name="Park H.-S."/>
            <person name="Park Y.-H."/>
            <person name="Oh T.K."/>
        </authorList>
    </citation>
    <scope>NUCLEOTIDE SEQUENCE [LARGE SCALE GENOMIC DNA]</scope>
    <source>
        <strain>KM20</strain>
    </source>
</reference>